<name>RDD1_HUMAN</name>
<protein>
    <recommendedName>
        <fullName evidence="5">Required for drug-induced death protein 1</fullName>
    </recommendedName>
</protein>
<proteinExistence type="evidence at protein level"/>
<evidence type="ECO:0000255" key="1"/>
<evidence type="ECO:0000256" key="2">
    <source>
        <dbReference type="SAM" id="MobiDB-lite"/>
    </source>
</evidence>
<evidence type="ECO:0000269" key="3">
    <source>
    </source>
</evidence>
<evidence type="ECO:0000269" key="4">
    <source>
    </source>
</evidence>
<evidence type="ECO:0000303" key="5">
    <source>
    </source>
</evidence>
<evidence type="ECO:0000305" key="6"/>
<evidence type="ECO:0000312" key="7">
    <source>
        <dbReference type="HGNC" id="HGNC:25873"/>
    </source>
</evidence>
<feature type="chain" id="PRO_0000265073" description="Required for drug-induced death protein 1">
    <location>
        <begin position="1"/>
        <end position="142"/>
    </location>
</feature>
<feature type="transmembrane region" description="Helical" evidence="1">
    <location>
        <begin position="116"/>
        <end position="138"/>
    </location>
</feature>
<feature type="region of interest" description="Disordered" evidence="2">
    <location>
        <begin position="1"/>
        <end position="32"/>
    </location>
</feature>
<feature type="region of interest" description="Disordered" evidence="2">
    <location>
        <begin position="46"/>
        <end position="66"/>
    </location>
</feature>
<keyword id="KW-0472">Membrane</keyword>
<keyword id="KW-1267">Proteomics identification</keyword>
<keyword id="KW-1185">Reference proteome</keyword>
<keyword id="KW-0812">Transmembrane</keyword>
<keyword id="KW-1133">Transmembrane helix</keyword>
<reference key="1">
    <citation type="journal article" date="2004" name="Nat. Genet.">
        <title>Complete sequencing and characterization of 21,243 full-length human cDNAs.</title>
        <authorList>
            <person name="Ota T."/>
            <person name="Suzuki Y."/>
            <person name="Nishikawa T."/>
            <person name="Otsuki T."/>
            <person name="Sugiyama T."/>
            <person name="Irie R."/>
            <person name="Wakamatsu A."/>
            <person name="Hayashi K."/>
            <person name="Sato H."/>
            <person name="Nagai K."/>
            <person name="Kimura K."/>
            <person name="Makita H."/>
            <person name="Sekine M."/>
            <person name="Obayashi M."/>
            <person name="Nishi T."/>
            <person name="Shibahara T."/>
            <person name="Tanaka T."/>
            <person name="Ishii S."/>
            <person name="Yamamoto J."/>
            <person name="Saito K."/>
            <person name="Kawai Y."/>
            <person name="Isono Y."/>
            <person name="Nakamura Y."/>
            <person name="Nagahari K."/>
            <person name="Murakami K."/>
            <person name="Yasuda T."/>
            <person name="Iwayanagi T."/>
            <person name="Wagatsuma M."/>
            <person name="Shiratori A."/>
            <person name="Sudo H."/>
            <person name="Hosoiri T."/>
            <person name="Kaku Y."/>
            <person name="Kodaira H."/>
            <person name="Kondo H."/>
            <person name="Sugawara M."/>
            <person name="Takahashi M."/>
            <person name="Kanda K."/>
            <person name="Yokoi T."/>
            <person name="Furuya T."/>
            <person name="Kikkawa E."/>
            <person name="Omura Y."/>
            <person name="Abe K."/>
            <person name="Kamihara K."/>
            <person name="Katsuta N."/>
            <person name="Sato K."/>
            <person name="Tanikawa M."/>
            <person name="Yamazaki M."/>
            <person name="Ninomiya K."/>
            <person name="Ishibashi T."/>
            <person name="Yamashita H."/>
            <person name="Murakawa K."/>
            <person name="Fujimori K."/>
            <person name="Tanai H."/>
            <person name="Kimata M."/>
            <person name="Watanabe M."/>
            <person name="Hiraoka S."/>
            <person name="Chiba Y."/>
            <person name="Ishida S."/>
            <person name="Ono Y."/>
            <person name="Takiguchi S."/>
            <person name="Watanabe S."/>
            <person name="Yosida M."/>
            <person name="Hotuta T."/>
            <person name="Kusano J."/>
            <person name="Kanehori K."/>
            <person name="Takahashi-Fujii A."/>
            <person name="Hara H."/>
            <person name="Tanase T.-O."/>
            <person name="Nomura Y."/>
            <person name="Togiya S."/>
            <person name="Komai F."/>
            <person name="Hara R."/>
            <person name="Takeuchi K."/>
            <person name="Arita M."/>
            <person name="Imose N."/>
            <person name="Musashino K."/>
            <person name="Yuuki H."/>
            <person name="Oshima A."/>
            <person name="Sasaki N."/>
            <person name="Aotsuka S."/>
            <person name="Yoshikawa Y."/>
            <person name="Matsunawa H."/>
            <person name="Ichihara T."/>
            <person name="Shiohata N."/>
            <person name="Sano S."/>
            <person name="Moriya S."/>
            <person name="Momiyama H."/>
            <person name="Satoh N."/>
            <person name="Takami S."/>
            <person name="Terashima Y."/>
            <person name="Suzuki O."/>
            <person name="Nakagawa S."/>
            <person name="Senoh A."/>
            <person name="Mizoguchi H."/>
            <person name="Goto Y."/>
            <person name="Shimizu F."/>
            <person name="Wakebe H."/>
            <person name="Hishigaki H."/>
            <person name="Watanabe T."/>
            <person name="Sugiyama A."/>
            <person name="Takemoto M."/>
            <person name="Kawakami B."/>
            <person name="Yamazaki M."/>
            <person name="Watanabe K."/>
            <person name="Kumagai A."/>
            <person name="Itakura S."/>
            <person name="Fukuzumi Y."/>
            <person name="Fujimori Y."/>
            <person name="Komiyama M."/>
            <person name="Tashiro H."/>
            <person name="Tanigami A."/>
            <person name="Fujiwara T."/>
            <person name="Ono T."/>
            <person name="Yamada K."/>
            <person name="Fujii Y."/>
            <person name="Ozaki K."/>
            <person name="Hirao M."/>
            <person name="Ohmori Y."/>
            <person name="Kawabata A."/>
            <person name="Hikiji T."/>
            <person name="Kobatake N."/>
            <person name="Inagaki H."/>
            <person name="Ikema Y."/>
            <person name="Okamoto S."/>
            <person name="Okitani R."/>
            <person name="Kawakami T."/>
            <person name="Noguchi S."/>
            <person name="Itoh T."/>
            <person name="Shigeta K."/>
            <person name="Senba T."/>
            <person name="Matsumura K."/>
            <person name="Nakajima Y."/>
            <person name="Mizuno T."/>
            <person name="Morinaga M."/>
            <person name="Sasaki M."/>
            <person name="Togashi T."/>
            <person name="Oyama M."/>
            <person name="Hata H."/>
            <person name="Watanabe M."/>
            <person name="Komatsu T."/>
            <person name="Mizushima-Sugano J."/>
            <person name="Satoh T."/>
            <person name="Shirai Y."/>
            <person name="Takahashi Y."/>
            <person name="Nakagawa K."/>
            <person name="Okumura K."/>
            <person name="Nagase T."/>
            <person name="Nomura N."/>
            <person name="Kikuchi H."/>
            <person name="Masuho Y."/>
            <person name="Yamashita R."/>
            <person name="Nakai K."/>
            <person name="Yada T."/>
            <person name="Nakamura Y."/>
            <person name="Ohara O."/>
            <person name="Isogai T."/>
            <person name="Sugano S."/>
        </authorList>
    </citation>
    <scope>NUCLEOTIDE SEQUENCE [LARGE SCALE MRNA]</scope>
    <source>
        <tissue>Kidney</tissue>
        <tissue>Mammary gland</tissue>
    </source>
</reference>
<reference key="2">
    <citation type="journal article" date="2006" name="Nature">
        <title>The DNA sequence and biological annotation of human chromosome 1.</title>
        <authorList>
            <person name="Gregory S.G."/>
            <person name="Barlow K.F."/>
            <person name="McLay K.E."/>
            <person name="Kaul R."/>
            <person name="Swarbreck D."/>
            <person name="Dunham A."/>
            <person name="Scott C.E."/>
            <person name="Howe K.L."/>
            <person name="Woodfine K."/>
            <person name="Spencer C.C.A."/>
            <person name="Jones M.C."/>
            <person name="Gillson C."/>
            <person name="Searle S."/>
            <person name="Zhou Y."/>
            <person name="Kokocinski F."/>
            <person name="McDonald L."/>
            <person name="Evans R."/>
            <person name="Phillips K."/>
            <person name="Atkinson A."/>
            <person name="Cooper R."/>
            <person name="Jones C."/>
            <person name="Hall R.E."/>
            <person name="Andrews T.D."/>
            <person name="Lloyd C."/>
            <person name="Ainscough R."/>
            <person name="Almeida J.P."/>
            <person name="Ambrose K.D."/>
            <person name="Anderson F."/>
            <person name="Andrew R.W."/>
            <person name="Ashwell R.I.S."/>
            <person name="Aubin K."/>
            <person name="Babbage A.K."/>
            <person name="Bagguley C.L."/>
            <person name="Bailey J."/>
            <person name="Beasley H."/>
            <person name="Bethel G."/>
            <person name="Bird C.P."/>
            <person name="Bray-Allen S."/>
            <person name="Brown J.Y."/>
            <person name="Brown A.J."/>
            <person name="Buckley D."/>
            <person name="Burton J."/>
            <person name="Bye J."/>
            <person name="Carder C."/>
            <person name="Chapman J.C."/>
            <person name="Clark S.Y."/>
            <person name="Clarke G."/>
            <person name="Clee C."/>
            <person name="Cobley V."/>
            <person name="Collier R.E."/>
            <person name="Corby N."/>
            <person name="Coville G.J."/>
            <person name="Davies J."/>
            <person name="Deadman R."/>
            <person name="Dunn M."/>
            <person name="Earthrowl M."/>
            <person name="Ellington A.G."/>
            <person name="Errington H."/>
            <person name="Frankish A."/>
            <person name="Frankland J."/>
            <person name="French L."/>
            <person name="Garner P."/>
            <person name="Garnett J."/>
            <person name="Gay L."/>
            <person name="Ghori M.R.J."/>
            <person name="Gibson R."/>
            <person name="Gilby L.M."/>
            <person name="Gillett W."/>
            <person name="Glithero R.J."/>
            <person name="Grafham D.V."/>
            <person name="Griffiths C."/>
            <person name="Griffiths-Jones S."/>
            <person name="Grocock R."/>
            <person name="Hammond S."/>
            <person name="Harrison E.S.I."/>
            <person name="Hart E."/>
            <person name="Haugen E."/>
            <person name="Heath P.D."/>
            <person name="Holmes S."/>
            <person name="Holt K."/>
            <person name="Howden P.J."/>
            <person name="Hunt A.R."/>
            <person name="Hunt S.E."/>
            <person name="Hunter G."/>
            <person name="Isherwood J."/>
            <person name="James R."/>
            <person name="Johnson C."/>
            <person name="Johnson D."/>
            <person name="Joy A."/>
            <person name="Kay M."/>
            <person name="Kershaw J.K."/>
            <person name="Kibukawa M."/>
            <person name="Kimberley A.M."/>
            <person name="King A."/>
            <person name="Knights A.J."/>
            <person name="Lad H."/>
            <person name="Laird G."/>
            <person name="Lawlor S."/>
            <person name="Leongamornlert D.A."/>
            <person name="Lloyd D.M."/>
            <person name="Loveland J."/>
            <person name="Lovell J."/>
            <person name="Lush M.J."/>
            <person name="Lyne R."/>
            <person name="Martin S."/>
            <person name="Mashreghi-Mohammadi M."/>
            <person name="Matthews L."/>
            <person name="Matthews N.S.W."/>
            <person name="McLaren S."/>
            <person name="Milne S."/>
            <person name="Mistry S."/>
            <person name="Moore M.J.F."/>
            <person name="Nickerson T."/>
            <person name="O'Dell C.N."/>
            <person name="Oliver K."/>
            <person name="Palmeiri A."/>
            <person name="Palmer S.A."/>
            <person name="Parker A."/>
            <person name="Patel D."/>
            <person name="Pearce A.V."/>
            <person name="Peck A.I."/>
            <person name="Pelan S."/>
            <person name="Phelps K."/>
            <person name="Phillimore B.J."/>
            <person name="Plumb R."/>
            <person name="Rajan J."/>
            <person name="Raymond C."/>
            <person name="Rouse G."/>
            <person name="Saenphimmachak C."/>
            <person name="Sehra H.K."/>
            <person name="Sheridan E."/>
            <person name="Shownkeen R."/>
            <person name="Sims S."/>
            <person name="Skuce C.D."/>
            <person name="Smith M."/>
            <person name="Steward C."/>
            <person name="Subramanian S."/>
            <person name="Sycamore N."/>
            <person name="Tracey A."/>
            <person name="Tromans A."/>
            <person name="Van Helmond Z."/>
            <person name="Wall M."/>
            <person name="Wallis J.M."/>
            <person name="White S."/>
            <person name="Whitehead S.L."/>
            <person name="Wilkinson J.E."/>
            <person name="Willey D.L."/>
            <person name="Williams H."/>
            <person name="Wilming L."/>
            <person name="Wray P.W."/>
            <person name="Wu Z."/>
            <person name="Coulson A."/>
            <person name="Vaudin M."/>
            <person name="Sulston J.E."/>
            <person name="Durbin R.M."/>
            <person name="Hubbard T."/>
            <person name="Wooster R."/>
            <person name="Dunham I."/>
            <person name="Carter N.P."/>
            <person name="McVean G."/>
            <person name="Ross M.T."/>
            <person name="Harrow J."/>
            <person name="Olson M.V."/>
            <person name="Beck S."/>
            <person name="Rogers J."/>
            <person name="Bentley D.R."/>
        </authorList>
    </citation>
    <scope>NUCLEOTIDE SEQUENCE [LARGE SCALE GENOMIC DNA]</scope>
</reference>
<reference key="3">
    <citation type="submission" date="2005-09" db="EMBL/GenBank/DDBJ databases">
        <authorList>
            <person name="Mural R.J."/>
            <person name="Istrail S."/>
            <person name="Sutton G.G."/>
            <person name="Florea L."/>
            <person name="Halpern A.L."/>
            <person name="Mobarry C.M."/>
            <person name="Lippert R."/>
            <person name="Walenz B."/>
            <person name="Shatkay H."/>
            <person name="Dew I."/>
            <person name="Miller J.R."/>
            <person name="Flanigan M.J."/>
            <person name="Edwards N.J."/>
            <person name="Bolanos R."/>
            <person name="Fasulo D."/>
            <person name="Halldorsson B.V."/>
            <person name="Hannenhalli S."/>
            <person name="Turner R."/>
            <person name="Yooseph S."/>
            <person name="Lu F."/>
            <person name="Nusskern D.R."/>
            <person name="Shue B.C."/>
            <person name="Zheng X.H."/>
            <person name="Zhong F."/>
            <person name="Delcher A.L."/>
            <person name="Huson D.H."/>
            <person name="Kravitz S.A."/>
            <person name="Mouchard L."/>
            <person name="Reinert K."/>
            <person name="Remington K.A."/>
            <person name="Clark A.G."/>
            <person name="Waterman M.S."/>
            <person name="Eichler E.E."/>
            <person name="Adams M.D."/>
            <person name="Hunkapiller M.W."/>
            <person name="Myers E.W."/>
            <person name="Venter J.C."/>
        </authorList>
    </citation>
    <scope>NUCLEOTIDE SEQUENCE [LARGE SCALE GENOMIC DNA]</scope>
</reference>
<reference key="4">
    <citation type="journal article" date="2004" name="Genome Res.">
        <title>The status, quality, and expansion of the NIH full-length cDNA project: the Mammalian Gene Collection (MGC).</title>
        <authorList>
            <consortium name="The MGC Project Team"/>
        </authorList>
    </citation>
    <scope>NUCLEOTIDE SEQUENCE [LARGE SCALE MRNA]</scope>
    <source>
        <tissue>Brain</tissue>
    </source>
</reference>
<reference key="5">
    <citation type="journal article" date="2020" name="Genome Biol.">
        <title>Systematic functional identification of cancer multi-drug resistance genes.</title>
        <authorList>
            <person name="Lau M.T."/>
            <person name="Ghazanfar S."/>
            <person name="Parkin A."/>
            <person name="Chou A."/>
            <person name="Rouaen J.R."/>
            <person name="Littleboy J.B."/>
            <person name="Nessem D."/>
            <person name="Khuong T.M."/>
            <person name="Nevoltris D."/>
            <person name="Schofield P."/>
            <person name="Langley D."/>
            <person name="Christ D."/>
            <person name="Yang J."/>
            <person name="Pajic M."/>
            <person name="Neely G.G."/>
        </authorList>
    </citation>
    <scope>FUNCTION</scope>
</reference>
<reference key="6">
    <citation type="journal article" date="2022" name="Nat. Chem. Biol.">
        <title>Chemical genomics with pyrvinium identifies C1orf115 as a regulator of drug efflux.</title>
        <authorList>
            <person name="Masud S.N."/>
            <person name="Chandrashekhar M."/>
            <person name="Aregger M."/>
            <person name="Tan G."/>
            <person name="Zhang X."/>
            <person name="Mero P."/>
            <person name="Pirman D.A."/>
            <person name="Zaslaver O."/>
            <person name="Smolen G.A."/>
            <person name="Lin Z.Y."/>
            <person name="Wong C.J."/>
            <person name="Boone C."/>
            <person name="Gingras A.C."/>
            <person name="Montenegro-Burke J.R."/>
            <person name="Moffat J."/>
        </authorList>
    </citation>
    <scope>FUNCTION</scope>
</reference>
<organism>
    <name type="scientific">Homo sapiens</name>
    <name type="common">Human</name>
    <dbReference type="NCBI Taxonomy" id="9606"/>
    <lineage>
        <taxon>Eukaryota</taxon>
        <taxon>Metazoa</taxon>
        <taxon>Chordata</taxon>
        <taxon>Craniata</taxon>
        <taxon>Vertebrata</taxon>
        <taxon>Euteleostomi</taxon>
        <taxon>Mammalia</taxon>
        <taxon>Eutheria</taxon>
        <taxon>Euarchontoglires</taxon>
        <taxon>Primates</taxon>
        <taxon>Haplorrhini</taxon>
        <taxon>Catarrhini</taxon>
        <taxon>Hominidae</taxon>
        <taxon>Homo</taxon>
    </lineage>
</organism>
<accession>Q9H7X2</accession>
<accession>B3KRN3</accession>
<accession>D3DTB2</accession>
<gene>
    <name evidence="7" type="primary">C1orf115</name>
    <name evidence="5" type="synonym">RDD1</name>
</gene>
<dbReference type="EMBL" id="AK024208">
    <property type="protein sequence ID" value="BAB14851.1"/>
    <property type="molecule type" value="mRNA"/>
</dbReference>
<dbReference type="EMBL" id="AK091937">
    <property type="protein sequence ID" value="BAG52445.1"/>
    <property type="molecule type" value="mRNA"/>
</dbReference>
<dbReference type="EMBL" id="AL592406">
    <property type="status" value="NOT_ANNOTATED_CDS"/>
    <property type="molecule type" value="Genomic_DNA"/>
</dbReference>
<dbReference type="EMBL" id="CH471100">
    <property type="protein sequence ID" value="EAW93296.1"/>
    <property type="molecule type" value="Genomic_DNA"/>
</dbReference>
<dbReference type="EMBL" id="CH471100">
    <property type="protein sequence ID" value="EAW93297.1"/>
    <property type="molecule type" value="Genomic_DNA"/>
</dbReference>
<dbReference type="EMBL" id="BC036067">
    <property type="protein sequence ID" value="AAH36067.1"/>
    <property type="molecule type" value="mRNA"/>
</dbReference>
<dbReference type="CCDS" id="CCDS1524.1"/>
<dbReference type="RefSeq" id="NP_078985.3">
    <property type="nucleotide sequence ID" value="NM_024709.5"/>
</dbReference>
<dbReference type="SMR" id="Q9H7X2"/>
<dbReference type="BioGRID" id="122870">
    <property type="interactions" value="27"/>
</dbReference>
<dbReference type="FunCoup" id="Q9H7X2">
    <property type="interactions" value="2"/>
</dbReference>
<dbReference type="IntAct" id="Q9H7X2">
    <property type="interactions" value="20"/>
</dbReference>
<dbReference type="STRING" id="9606.ENSP00000294889"/>
<dbReference type="iPTMnet" id="Q9H7X2"/>
<dbReference type="PhosphoSitePlus" id="Q9H7X2"/>
<dbReference type="BioMuta" id="C1orf115"/>
<dbReference type="jPOST" id="Q9H7X2"/>
<dbReference type="MassIVE" id="Q9H7X2"/>
<dbReference type="PaxDb" id="9606-ENSP00000294889"/>
<dbReference type="PeptideAtlas" id="Q9H7X2"/>
<dbReference type="ProteomicsDB" id="81153"/>
<dbReference type="Antibodypedia" id="68357">
    <property type="antibodies" value="56 antibodies from 12 providers"/>
</dbReference>
<dbReference type="DNASU" id="79762"/>
<dbReference type="Ensembl" id="ENST00000294889.6">
    <property type="protein sequence ID" value="ENSP00000294889.5"/>
    <property type="gene ID" value="ENSG00000162817.7"/>
</dbReference>
<dbReference type="GeneID" id="79762"/>
<dbReference type="KEGG" id="hsa:79762"/>
<dbReference type="MANE-Select" id="ENST00000294889.6">
    <property type="protein sequence ID" value="ENSP00000294889.5"/>
    <property type="RefSeq nucleotide sequence ID" value="NM_024709.5"/>
    <property type="RefSeq protein sequence ID" value="NP_078985.3"/>
</dbReference>
<dbReference type="UCSC" id="uc001hmp.2">
    <property type="organism name" value="human"/>
</dbReference>
<dbReference type="AGR" id="HGNC:25873"/>
<dbReference type="CTD" id="79762"/>
<dbReference type="DisGeNET" id="79762"/>
<dbReference type="GeneCards" id="C1orf115"/>
<dbReference type="HGNC" id="HGNC:25873">
    <property type="gene designation" value="C1orf115"/>
</dbReference>
<dbReference type="HPA" id="ENSG00000162817">
    <property type="expression patterns" value="Tissue enhanced (intestine)"/>
</dbReference>
<dbReference type="neXtProt" id="NX_Q9H7X2"/>
<dbReference type="OpenTargets" id="ENSG00000162817"/>
<dbReference type="PharmGKB" id="PA142672499"/>
<dbReference type="VEuPathDB" id="HostDB:ENSG00000162817"/>
<dbReference type="eggNOG" id="ENOG502S8G4">
    <property type="taxonomic scope" value="Eukaryota"/>
</dbReference>
<dbReference type="GeneTree" id="ENSGT00390000004585"/>
<dbReference type="HOGENOM" id="CLU_116334_0_0_1"/>
<dbReference type="InParanoid" id="Q9H7X2"/>
<dbReference type="OMA" id="EHLECGD"/>
<dbReference type="PAN-GO" id="Q9H7X2">
    <property type="GO annotations" value="0 GO annotations based on evolutionary models"/>
</dbReference>
<dbReference type="PhylomeDB" id="Q9H7X2"/>
<dbReference type="TreeFam" id="TF338404"/>
<dbReference type="PathwayCommons" id="Q9H7X2"/>
<dbReference type="BioGRID-ORCS" id="79762">
    <property type="hits" value="12 hits in 1139 CRISPR screens"/>
</dbReference>
<dbReference type="ChiTaRS" id="C1orf115">
    <property type="organism name" value="human"/>
</dbReference>
<dbReference type="GenomeRNAi" id="79762"/>
<dbReference type="Pharos" id="Q9H7X2">
    <property type="development level" value="Tdark"/>
</dbReference>
<dbReference type="PRO" id="PR:Q9H7X2"/>
<dbReference type="Proteomes" id="UP000005640">
    <property type="component" value="Chromosome 1"/>
</dbReference>
<dbReference type="RNAct" id="Q9H7X2">
    <property type="molecule type" value="protein"/>
</dbReference>
<dbReference type="Bgee" id="ENSG00000162817">
    <property type="expression patterns" value="Expressed in parotid gland and 198 other cell types or tissues"/>
</dbReference>
<dbReference type="GO" id="GO:0097731">
    <property type="term" value="C:9+0 non-motile cilium"/>
    <property type="evidence" value="ECO:0000314"/>
    <property type="project" value="GO_Central"/>
</dbReference>
<dbReference type="GO" id="GO:0016020">
    <property type="term" value="C:membrane"/>
    <property type="evidence" value="ECO:0007669"/>
    <property type="project" value="UniProtKB-SubCell"/>
</dbReference>
<dbReference type="GO" id="GO:2001023">
    <property type="term" value="P:regulation of response to drug"/>
    <property type="evidence" value="ECO:0000314"/>
    <property type="project" value="UniProtKB"/>
</dbReference>
<dbReference type="InterPro" id="IPR031667">
    <property type="entry name" value="RDD1"/>
</dbReference>
<dbReference type="PANTHER" id="PTHR14680:SF1">
    <property type="entry name" value="REQUIRED FOR DRUG-INDUCED DEATH PROTEIN 1"/>
    <property type="match status" value="1"/>
</dbReference>
<dbReference type="PANTHER" id="PTHR14680">
    <property type="entry name" value="SI:DKEY-126G1.9-RELATED"/>
    <property type="match status" value="1"/>
</dbReference>
<dbReference type="Pfam" id="PF15828">
    <property type="entry name" value="RDD1"/>
    <property type="match status" value="1"/>
</dbReference>
<sequence length="142" mass="15517">MTVGARLRSKAESSLLRRGPRGRGRTEGDEEAAAILEHLEYADEAEAAAESGTSAADERGPGTRGARRVHFALLPERYEPLEEPAPSEQPRKRYRRKLKKYGKNVGKVIIKGCRYVVIGLQGFAAAYSAPFAVATSVVSFVR</sequence>
<comment type="function">
    <text evidence="3 4">Regulates drug efflux through modulation of ABCB1 localization and activity.</text>
</comment>
<comment type="subcellular location">
    <subcellularLocation>
        <location evidence="6">Membrane</location>
        <topology evidence="1">Single-pass membrane protein</topology>
    </subcellularLocation>
</comment>